<protein>
    <recommendedName>
        <fullName>Rop guanine nucleotide exchange factor 11</fullName>
        <shortName>AtRopGEF11</shortName>
    </recommendedName>
    <alternativeName>
        <fullName>Phytochrome interacting RopGEF 1</fullName>
    </alternativeName>
    <alternativeName>
        <fullName>Rho of plants guanine nucleotide exchange factor 11</fullName>
    </alternativeName>
</protein>
<sequence length="543" mass="61655">MVKAMEQEQETYKSRLFHFKNMNENSASRHVKSWSSDCAMRMDGSDNLDDDDNDMMMFRSQPGKCGSVDRPSLPIGGVTPNRNDKLPRVSSSDSMEALIILQAAMEQMKEKFSKLLLGEDMSGGGKGVSSALALSNAITNLAASAFGEQRRLEPMAVDRKTRWRREIGWLISVADYIVEFAPTQQTNKDGTSMEVMSTRQRTDLLCNIPALKKLDAMLLDCLDKFKDQDEFYYVKKDSPDSCETRNDEKWWLPAVKVPPNGLSEISRRFLQSQKECVNQVLKAAMAINAQVLSEMEIPESYLESLPKNGRASLGDVIYRMITVEMFDADQFLIEMDLSSEHKILDLKNRIEASIVIWKRKMVQKDTKSPWGSTVSIEKREQFEERAETILLLLKQGFPGISQSSLDISKIQFNRDVGLAILESYSRVLESLAHTVMSRIEDVLYADQLTQEPTNNAPSKNRYSLKENEKLREERLSFTEDMASGTLSDVMQWGNKNNEMKKESFFGDREKPLLSKVTGIMTNNKKSSYLDNLGAMRSPTARYS</sequence>
<keyword id="KW-0025">Alternative splicing</keyword>
<keyword id="KW-0963">Cytoplasm</keyword>
<keyword id="KW-0344">Guanine-nucleotide releasing factor</keyword>
<keyword id="KW-1185">Reference proteome</keyword>
<accession>Q9M811</accession>
<accession>B3LF51</accession>
<accession>F4ICV0</accession>
<gene>
    <name type="primary">ROPGEF11</name>
    <name type="synonym">PIRF1</name>
    <name type="ordered locus">At1g52240</name>
    <name type="ORF">F9I5.12</name>
</gene>
<proteinExistence type="evidence at protein level"/>
<feature type="chain" id="PRO_0000423896" description="Rop guanine nucleotide exchange factor 11">
    <location>
        <begin position="1"/>
        <end position="543"/>
    </location>
</feature>
<feature type="domain" description="PRONE" evidence="2">
    <location>
        <begin position="95"/>
        <end position="456"/>
    </location>
</feature>
<feature type="region of interest" description="Disordered" evidence="3">
    <location>
        <begin position="61"/>
        <end position="89"/>
    </location>
</feature>
<organism>
    <name type="scientific">Arabidopsis thaliana</name>
    <name type="common">Mouse-ear cress</name>
    <dbReference type="NCBI Taxonomy" id="3702"/>
    <lineage>
        <taxon>Eukaryota</taxon>
        <taxon>Viridiplantae</taxon>
        <taxon>Streptophyta</taxon>
        <taxon>Embryophyta</taxon>
        <taxon>Tracheophyta</taxon>
        <taxon>Spermatophyta</taxon>
        <taxon>Magnoliopsida</taxon>
        <taxon>eudicotyledons</taxon>
        <taxon>Gunneridae</taxon>
        <taxon>Pentapetalae</taxon>
        <taxon>rosids</taxon>
        <taxon>malvids</taxon>
        <taxon>Brassicales</taxon>
        <taxon>Brassicaceae</taxon>
        <taxon>Camelineae</taxon>
        <taxon>Arabidopsis</taxon>
    </lineage>
</organism>
<reference key="1">
    <citation type="journal article" date="2000" name="Nature">
        <title>Sequence and analysis of chromosome 1 of the plant Arabidopsis thaliana.</title>
        <authorList>
            <person name="Theologis A."/>
            <person name="Ecker J.R."/>
            <person name="Palm C.J."/>
            <person name="Federspiel N.A."/>
            <person name="Kaul S."/>
            <person name="White O."/>
            <person name="Alonso J."/>
            <person name="Altafi H."/>
            <person name="Araujo R."/>
            <person name="Bowman C.L."/>
            <person name="Brooks S.Y."/>
            <person name="Buehler E."/>
            <person name="Chan A."/>
            <person name="Chao Q."/>
            <person name="Chen H."/>
            <person name="Cheuk R.F."/>
            <person name="Chin C.W."/>
            <person name="Chung M.K."/>
            <person name="Conn L."/>
            <person name="Conway A.B."/>
            <person name="Conway A.R."/>
            <person name="Creasy T.H."/>
            <person name="Dewar K."/>
            <person name="Dunn P."/>
            <person name="Etgu P."/>
            <person name="Feldblyum T.V."/>
            <person name="Feng J.-D."/>
            <person name="Fong B."/>
            <person name="Fujii C.Y."/>
            <person name="Gill J.E."/>
            <person name="Goldsmith A.D."/>
            <person name="Haas B."/>
            <person name="Hansen N.F."/>
            <person name="Hughes B."/>
            <person name="Huizar L."/>
            <person name="Hunter J.L."/>
            <person name="Jenkins J."/>
            <person name="Johnson-Hopson C."/>
            <person name="Khan S."/>
            <person name="Khaykin E."/>
            <person name="Kim C.J."/>
            <person name="Koo H.L."/>
            <person name="Kremenetskaia I."/>
            <person name="Kurtz D.B."/>
            <person name="Kwan A."/>
            <person name="Lam B."/>
            <person name="Langin-Hooper S."/>
            <person name="Lee A."/>
            <person name="Lee J.M."/>
            <person name="Lenz C.A."/>
            <person name="Li J.H."/>
            <person name="Li Y.-P."/>
            <person name="Lin X."/>
            <person name="Liu S.X."/>
            <person name="Liu Z.A."/>
            <person name="Luros J.S."/>
            <person name="Maiti R."/>
            <person name="Marziali A."/>
            <person name="Militscher J."/>
            <person name="Miranda M."/>
            <person name="Nguyen M."/>
            <person name="Nierman W.C."/>
            <person name="Osborne B.I."/>
            <person name="Pai G."/>
            <person name="Peterson J."/>
            <person name="Pham P.K."/>
            <person name="Rizzo M."/>
            <person name="Rooney T."/>
            <person name="Rowley D."/>
            <person name="Sakano H."/>
            <person name="Salzberg S.L."/>
            <person name="Schwartz J.R."/>
            <person name="Shinn P."/>
            <person name="Southwick A.M."/>
            <person name="Sun H."/>
            <person name="Tallon L.J."/>
            <person name="Tambunga G."/>
            <person name="Toriumi M.J."/>
            <person name="Town C.D."/>
            <person name="Utterback T."/>
            <person name="Van Aken S."/>
            <person name="Vaysberg M."/>
            <person name="Vysotskaia V.S."/>
            <person name="Walker M."/>
            <person name="Wu D."/>
            <person name="Yu G."/>
            <person name="Fraser C.M."/>
            <person name="Venter J.C."/>
            <person name="Davis R.W."/>
        </authorList>
    </citation>
    <scope>NUCLEOTIDE SEQUENCE [LARGE SCALE GENOMIC DNA]</scope>
    <source>
        <strain>cv. Columbia</strain>
    </source>
</reference>
<reference key="2">
    <citation type="journal article" date="2017" name="Plant J.">
        <title>Araport11: a complete reannotation of the Arabidopsis thaliana reference genome.</title>
        <authorList>
            <person name="Cheng C.Y."/>
            <person name="Krishnakumar V."/>
            <person name="Chan A.P."/>
            <person name="Thibaud-Nissen F."/>
            <person name="Schobel S."/>
            <person name="Town C.D."/>
        </authorList>
    </citation>
    <scope>GENOME REANNOTATION</scope>
    <source>
        <strain>cv. Columbia</strain>
    </source>
</reference>
<reference key="3">
    <citation type="submission" date="2008-06" db="EMBL/GenBank/DDBJ databases">
        <title>Arabidopsis ORF clones.</title>
        <authorList>
            <person name="De Los Reyes C."/>
            <person name="Quan R."/>
            <person name="Chen H."/>
            <person name="Bautista V.R."/>
            <person name="Kim C.J."/>
            <person name="Ecker J.R."/>
        </authorList>
    </citation>
    <scope>NUCLEOTIDE SEQUENCE [LARGE SCALE MRNA] OF 5-414</scope>
    <source>
        <strain>cv. Columbia</strain>
    </source>
</reference>
<reference key="4">
    <citation type="journal article" date="2005" name="Nature">
        <title>A new family of RhoGEFs activates the Rop molecular switch in plants.</title>
        <authorList>
            <person name="Berken A."/>
            <person name="Thomas C."/>
            <person name="Wittinghofer A."/>
        </authorList>
    </citation>
    <scope>GENE FAMILY</scope>
</reference>
<reference key="5">
    <citation type="journal article" date="2010" name="J. Biol. Chem.">
        <title>A small GTPase activator protein interacts with cytoplasmic phytochromes in regulating root development.</title>
        <authorList>
            <person name="Shin D.H."/>
            <person name="Cho M.H."/>
            <person name="Kim T.L."/>
            <person name="Yoo J."/>
            <person name="Kim J.I."/>
            <person name="Han Y.J."/>
            <person name="Song P.S."/>
            <person name="Jeon J.S."/>
            <person name="Bhoo S.H."/>
            <person name="Hahn T.R."/>
        </authorList>
    </citation>
    <scope>FUNCTION</scope>
    <scope>INTERACTION WITH ARAC4/ROP2; ARAC3/ROP6 ARAC9/ROP8; PHYA AND PHYB</scope>
    <scope>SUBCELLULAR LOCATION</scope>
    <scope>TISSUE SPECIFICITY</scope>
</reference>
<dbReference type="EMBL" id="AC022354">
    <property type="protein sequence ID" value="AAF29411.1"/>
    <property type="status" value="ALT_INIT"/>
    <property type="molecule type" value="Genomic_DNA"/>
</dbReference>
<dbReference type="EMBL" id="CP002684">
    <property type="protein sequence ID" value="AEE32773.2"/>
    <property type="molecule type" value="Genomic_DNA"/>
</dbReference>
<dbReference type="EMBL" id="BT033039">
    <property type="protein sequence ID" value="ACE79741.1"/>
    <property type="molecule type" value="mRNA"/>
</dbReference>
<dbReference type="PIR" id="D96562">
    <property type="entry name" value="D96562"/>
</dbReference>
<dbReference type="RefSeq" id="NP_175634.6">
    <molecule id="Q9M811-1"/>
    <property type="nucleotide sequence ID" value="NM_104103.6"/>
</dbReference>
<dbReference type="SMR" id="Q9M811"/>
<dbReference type="BioGRID" id="26879">
    <property type="interactions" value="5"/>
</dbReference>
<dbReference type="DIP" id="DIP-61929N"/>
<dbReference type="FunCoup" id="Q9M811">
    <property type="interactions" value="1"/>
</dbReference>
<dbReference type="IntAct" id="Q9M811">
    <property type="interactions" value="1"/>
</dbReference>
<dbReference type="STRING" id="3702.Q9M811"/>
<dbReference type="PaxDb" id="3702-AT1G52240.1"/>
<dbReference type="ProteomicsDB" id="228190">
    <molecule id="Q9M811-1"/>
</dbReference>
<dbReference type="EnsemblPlants" id="AT1G52240.1">
    <molecule id="Q9M811-1"/>
    <property type="protein sequence ID" value="AT1G52240.1"/>
    <property type="gene ID" value="AT1G52240"/>
</dbReference>
<dbReference type="GeneID" id="841654"/>
<dbReference type="Gramene" id="AT1G52240.1">
    <molecule id="Q9M811-1"/>
    <property type="protein sequence ID" value="AT1G52240.1"/>
    <property type="gene ID" value="AT1G52240"/>
</dbReference>
<dbReference type="KEGG" id="ath:AT1G52240"/>
<dbReference type="Araport" id="AT1G52240"/>
<dbReference type="TAIR" id="AT1G52240">
    <property type="gene designation" value="ROPGEF11"/>
</dbReference>
<dbReference type="eggNOG" id="KOG3430">
    <property type="taxonomic scope" value="Eukaryota"/>
</dbReference>
<dbReference type="HOGENOM" id="CLU_019073_1_0_1"/>
<dbReference type="InParanoid" id="Q9M811"/>
<dbReference type="OMA" id="RMFEIPR"/>
<dbReference type="PRO" id="PR:Q9M811"/>
<dbReference type="Proteomes" id="UP000006548">
    <property type="component" value="Chromosome 1"/>
</dbReference>
<dbReference type="ExpressionAtlas" id="Q9M811">
    <property type="expression patterns" value="baseline and differential"/>
</dbReference>
<dbReference type="GO" id="GO:0005737">
    <property type="term" value="C:cytoplasm"/>
    <property type="evidence" value="ECO:0000314"/>
    <property type="project" value="TAIR"/>
</dbReference>
<dbReference type="GO" id="GO:0005634">
    <property type="term" value="C:nucleus"/>
    <property type="evidence" value="ECO:0000314"/>
    <property type="project" value="TAIR"/>
</dbReference>
<dbReference type="GO" id="GO:0005085">
    <property type="term" value="F:guanyl-nucleotide exchange factor activity"/>
    <property type="evidence" value="ECO:0000250"/>
    <property type="project" value="TAIR"/>
</dbReference>
<dbReference type="GO" id="GO:0048364">
    <property type="term" value="P:root development"/>
    <property type="evidence" value="ECO:0000315"/>
    <property type="project" value="TAIR"/>
</dbReference>
<dbReference type="GO" id="GO:0080147">
    <property type="term" value="P:root hair cell development"/>
    <property type="evidence" value="ECO:0000315"/>
    <property type="project" value="TAIR"/>
</dbReference>
<dbReference type="FunFam" id="1.20.58.2010:FF:000001">
    <property type="entry name" value="Rop guanine nucleotide exchange factor 14"/>
    <property type="match status" value="1"/>
</dbReference>
<dbReference type="FunFam" id="1.20.58.2010:FF:000003">
    <property type="entry name" value="Rop guanine nucleotide exchange factor 14"/>
    <property type="match status" value="1"/>
</dbReference>
<dbReference type="FunFam" id="1.20.58.1310:FF:000001">
    <property type="entry name" value="Rop guanine nucleotide exchange factor 9"/>
    <property type="match status" value="1"/>
</dbReference>
<dbReference type="Gene3D" id="1.20.58.2010">
    <property type="entry name" value="PRONE domain, subdomain 1"/>
    <property type="match status" value="1"/>
</dbReference>
<dbReference type="Gene3D" id="1.20.58.1310">
    <property type="entry name" value="PRONE domain, subdomain 2"/>
    <property type="match status" value="1"/>
</dbReference>
<dbReference type="InterPro" id="IPR005512">
    <property type="entry name" value="PRONE_dom"/>
</dbReference>
<dbReference type="InterPro" id="IPR038937">
    <property type="entry name" value="RopGEF"/>
</dbReference>
<dbReference type="PANTHER" id="PTHR33101">
    <property type="entry name" value="ROP GUANINE NUCLEOTIDE EXCHANGE FACTOR 1"/>
    <property type="match status" value="1"/>
</dbReference>
<dbReference type="PANTHER" id="PTHR33101:SF45">
    <property type="entry name" value="ROP GUANINE NUCLEOTIDE EXCHANGE FACTOR 11"/>
    <property type="match status" value="1"/>
</dbReference>
<dbReference type="Pfam" id="PF03759">
    <property type="entry name" value="PRONE"/>
    <property type="match status" value="1"/>
</dbReference>
<dbReference type="PROSITE" id="PS51334">
    <property type="entry name" value="PRONE"/>
    <property type="match status" value="1"/>
</dbReference>
<evidence type="ECO:0000250" key="1"/>
<evidence type="ECO:0000255" key="2">
    <source>
        <dbReference type="PROSITE-ProRule" id="PRU00663"/>
    </source>
</evidence>
<evidence type="ECO:0000256" key="3">
    <source>
        <dbReference type="SAM" id="MobiDB-lite"/>
    </source>
</evidence>
<evidence type="ECO:0000269" key="4">
    <source>
    </source>
</evidence>
<evidence type="ECO:0000305" key="5"/>
<evidence type="ECO:0000305" key="6">
    <source>
    </source>
</evidence>
<name>ROGFB_ARATH</name>
<comment type="function">
    <text evidence="4">Guanine-nucleotide exchange factor (GEF) that acts as an activator of Rop (Rho of plants) GTPases by promoting the exchange of GDP for GTP. Functions as a light-signaling switch that functions in root growth and development through the activation of Rop in a phytochrome-dependent manner. May act as a negative regulator of phytochrome-mediated primary root development.</text>
</comment>
<comment type="subunit">
    <text evidence="4">Interacts with ARAC4/ROP2, ARAC3/ROP, ARAC9/ROP8, PHYA and PHYB.</text>
</comment>
<comment type="interaction">
    <interactant intactId="EBI-16206717">
        <id>Q9M811</id>
    </interactant>
    <interactant intactId="EBI-4425188">
        <id>Q93ZY2</id>
        <label>ROPGEF1</label>
    </interactant>
    <organismsDiffer>false</organismsDiffer>
    <experiments>3</experiments>
</comment>
<comment type="subcellular location">
    <subcellularLocation>
        <location evidence="4">Cytoplasm</location>
    </subcellularLocation>
    <text>Interacts with PHYA and PHYB in the cytoplasm in darkness.</text>
</comment>
<comment type="alternative products">
    <event type="alternative splicing"/>
    <isoform>
        <id>Q9M811-1</id>
        <name>1</name>
        <sequence type="displayed"/>
    </isoform>
    <text>A number of isoforms are produced. According to EST sequences.</text>
</comment>
<comment type="tissue specificity">
    <text evidence="4">Highly expressed in elongating regions of roots and pollen grains. Expressed in flowers, and at lower levels in leaves and stems.</text>
</comment>
<comment type="domain">
    <text evidence="1">The PRONE (plant-specific Rop nucleotide exchanger) domain is responsible for the GEF activity.</text>
</comment>
<comment type="miscellaneous">
    <text evidence="6">Plants overexpressing ROPGEF11 show retarded root elongation and irregular root hair formation.</text>
</comment>
<comment type="sequence caution" evidence="5">
    <conflict type="erroneous initiation">
        <sequence resource="EMBL-CDS" id="AAF29411"/>
    </conflict>
    <text>Truncated N-terminus.</text>
</comment>